<keyword id="KW-0150">Chloroplast</keyword>
<keyword id="KW-0472">Membrane</keyword>
<keyword id="KW-0520">NAD</keyword>
<keyword id="KW-0521">NADP</keyword>
<keyword id="KW-0934">Plastid</keyword>
<keyword id="KW-0618">Plastoquinone</keyword>
<keyword id="KW-0874">Quinone</keyword>
<keyword id="KW-0793">Thylakoid</keyword>
<keyword id="KW-1278">Translocase</keyword>
<keyword id="KW-0813">Transport</keyword>
<accession>A4QJT6</accession>
<sequence>MQGTLSVWLAKRGLVHRSLGFDYQGIETLQIKPEDWHSIAVILYVYGYNYLRSQCAYDVAPGGLLASVYHLTRIEYGVHQAEEVCIKVFTHRSNPRIPSVFWVWKSTDFQERESYDMLGITYDSHPRLKRILMPESWIGWPLRKDYIAPNFYEIQDAY</sequence>
<comment type="function">
    <text evidence="1">NDH shuttles electrons from NAD(P)H:plastoquinone, via FMN and iron-sulfur (Fe-S) centers, to quinones in the photosynthetic chain and possibly in a chloroplast respiratory chain. The immediate electron acceptor for the enzyme in this species is believed to be plastoquinone. Couples the redox reaction to proton translocation, and thus conserves the redox energy in a proton gradient.</text>
</comment>
<comment type="catalytic activity">
    <reaction evidence="1">
        <text>a plastoquinone + NADH + (n+1) H(+)(in) = a plastoquinol + NAD(+) + n H(+)(out)</text>
        <dbReference type="Rhea" id="RHEA:42608"/>
        <dbReference type="Rhea" id="RHEA-COMP:9561"/>
        <dbReference type="Rhea" id="RHEA-COMP:9562"/>
        <dbReference type="ChEBI" id="CHEBI:15378"/>
        <dbReference type="ChEBI" id="CHEBI:17757"/>
        <dbReference type="ChEBI" id="CHEBI:57540"/>
        <dbReference type="ChEBI" id="CHEBI:57945"/>
        <dbReference type="ChEBI" id="CHEBI:62192"/>
    </reaction>
</comment>
<comment type="catalytic activity">
    <reaction evidence="1">
        <text>a plastoquinone + NADPH + (n+1) H(+)(in) = a plastoquinol + NADP(+) + n H(+)(out)</text>
        <dbReference type="Rhea" id="RHEA:42612"/>
        <dbReference type="Rhea" id="RHEA-COMP:9561"/>
        <dbReference type="Rhea" id="RHEA-COMP:9562"/>
        <dbReference type="ChEBI" id="CHEBI:15378"/>
        <dbReference type="ChEBI" id="CHEBI:17757"/>
        <dbReference type="ChEBI" id="CHEBI:57783"/>
        <dbReference type="ChEBI" id="CHEBI:58349"/>
        <dbReference type="ChEBI" id="CHEBI:62192"/>
    </reaction>
</comment>
<comment type="subunit">
    <text evidence="1">NDH is composed of at least 16 different subunits, 5 of which are encoded in the nucleus.</text>
</comment>
<comment type="subcellular location">
    <subcellularLocation>
        <location evidence="1">Plastid</location>
        <location evidence="1">Chloroplast thylakoid membrane</location>
        <topology evidence="1">Peripheral membrane protein</topology>
        <orientation evidence="1">Stromal side</orientation>
    </subcellularLocation>
</comment>
<comment type="similarity">
    <text evidence="1">Belongs to the complex I 30 kDa subunit family.</text>
</comment>
<organism>
    <name type="scientific">Olimarabidopsis pumila</name>
    <name type="common">Dwarf rocket</name>
    <name type="synonym">Arabidopsis griffithiana</name>
    <dbReference type="NCBI Taxonomy" id="74718"/>
    <lineage>
        <taxon>Eukaryota</taxon>
        <taxon>Viridiplantae</taxon>
        <taxon>Streptophyta</taxon>
        <taxon>Embryophyta</taxon>
        <taxon>Tracheophyta</taxon>
        <taxon>Spermatophyta</taxon>
        <taxon>Magnoliopsida</taxon>
        <taxon>eudicotyledons</taxon>
        <taxon>Gunneridae</taxon>
        <taxon>Pentapetalae</taxon>
        <taxon>rosids</taxon>
        <taxon>malvids</taxon>
        <taxon>Brassicales</taxon>
        <taxon>Brassicaceae</taxon>
        <taxon>Alyssopsideae</taxon>
        <taxon>Olimarabidopsis</taxon>
    </lineage>
</organism>
<reference key="1">
    <citation type="submission" date="2007-03" db="EMBL/GenBank/DDBJ databases">
        <title>Sequence analysis of Arabidopsis pumila JS2 chloroplast DNA.</title>
        <authorList>
            <person name="Hosouchi T."/>
            <person name="Tsuruoka H."/>
            <person name="Kotani H."/>
        </authorList>
    </citation>
    <scope>NUCLEOTIDE SEQUENCE [LARGE SCALE GENOMIC DNA]</scope>
</reference>
<protein>
    <recommendedName>
        <fullName evidence="1">NAD(P)H-quinone oxidoreductase subunit J, chloroplastic</fullName>
        <ecNumber evidence="1">7.1.1.-</ecNumber>
    </recommendedName>
    <alternativeName>
        <fullName>NAD(P)H dehydrogenase subunit J</fullName>
    </alternativeName>
    <alternativeName>
        <fullName evidence="1">NADH-plastoquinone oxidoreductase subunit J</fullName>
    </alternativeName>
</protein>
<feature type="chain" id="PRO_0000358293" description="NAD(P)H-quinone oxidoreductase subunit J, chloroplastic">
    <location>
        <begin position="1"/>
        <end position="158"/>
    </location>
</feature>
<evidence type="ECO:0000255" key="1">
    <source>
        <dbReference type="HAMAP-Rule" id="MF_01357"/>
    </source>
</evidence>
<name>NDHJ_OLIPU</name>
<dbReference type="EC" id="7.1.1.-" evidence="1"/>
<dbReference type="EMBL" id="AP009368">
    <property type="protein sequence ID" value="BAF49942.1"/>
    <property type="molecule type" value="Genomic_DNA"/>
</dbReference>
<dbReference type="RefSeq" id="YP_001123118.1">
    <property type="nucleotide sequence ID" value="NC_009267.1"/>
</dbReference>
<dbReference type="SMR" id="A4QJT6"/>
<dbReference type="GeneID" id="4962460"/>
<dbReference type="GO" id="GO:0009535">
    <property type="term" value="C:chloroplast thylakoid membrane"/>
    <property type="evidence" value="ECO:0007669"/>
    <property type="project" value="UniProtKB-SubCell"/>
</dbReference>
<dbReference type="GO" id="GO:0008137">
    <property type="term" value="F:NADH dehydrogenase (ubiquinone) activity"/>
    <property type="evidence" value="ECO:0007669"/>
    <property type="project" value="InterPro"/>
</dbReference>
<dbReference type="GO" id="GO:0048038">
    <property type="term" value="F:quinone binding"/>
    <property type="evidence" value="ECO:0007669"/>
    <property type="project" value="UniProtKB-KW"/>
</dbReference>
<dbReference type="GO" id="GO:0019684">
    <property type="term" value="P:photosynthesis, light reaction"/>
    <property type="evidence" value="ECO:0007669"/>
    <property type="project" value="UniProtKB-UniRule"/>
</dbReference>
<dbReference type="FunFam" id="3.30.460.80:FF:000004">
    <property type="entry name" value="NAD(P)H-quinone oxidoreductase subunit J, chloroplastic"/>
    <property type="match status" value="1"/>
</dbReference>
<dbReference type="Gene3D" id="3.30.460.80">
    <property type="entry name" value="NADH:ubiquinone oxidoreductase, 30kDa subunit"/>
    <property type="match status" value="1"/>
</dbReference>
<dbReference type="HAMAP" id="MF_01357">
    <property type="entry name" value="NDH1_NuoC"/>
    <property type="match status" value="1"/>
</dbReference>
<dbReference type="InterPro" id="IPR010218">
    <property type="entry name" value="NADH_DH_suC"/>
</dbReference>
<dbReference type="InterPro" id="IPR037232">
    <property type="entry name" value="NADH_quin_OxRdtase_su_C/D-like"/>
</dbReference>
<dbReference type="InterPro" id="IPR001268">
    <property type="entry name" value="NADH_UbQ_OxRdtase_30kDa_su"/>
</dbReference>
<dbReference type="InterPro" id="IPR020396">
    <property type="entry name" value="NADH_UbQ_OxRdtase_CS"/>
</dbReference>
<dbReference type="NCBIfam" id="NF009141">
    <property type="entry name" value="PRK12494.1"/>
    <property type="match status" value="1"/>
</dbReference>
<dbReference type="PANTHER" id="PTHR10884:SF14">
    <property type="entry name" value="NADH DEHYDROGENASE [UBIQUINONE] IRON-SULFUR PROTEIN 3, MITOCHONDRIAL"/>
    <property type="match status" value="1"/>
</dbReference>
<dbReference type="PANTHER" id="PTHR10884">
    <property type="entry name" value="NADH DEHYDROGENASE UBIQUINONE IRON-SULFUR PROTEIN 3"/>
    <property type="match status" value="1"/>
</dbReference>
<dbReference type="Pfam" id="PF00329">
    <property type="entry name" value="Complex1_30kDa"/>
    <property type="match status" value="1"/>
</dbReference>
<dbReference type="SUPFAM" id="SSF143243">
    <property type="entry name" value="Nqo5-like"/>
    <property type="match status" value="1"/>
</dbReference>
<dbReference type="PROSITE" id="PS00542">
    <property type="entry name" value="COMPLEX1_30K"/>
    <property type="match status" value="1"/>
</dbReference>
<gene>
    <name evidence="1" type="primary">ndhJ</name>
</gene>
<geneLocation type="chloroplast"/>
<proteinExistence type="inferred from homology"/>